<sequence>MKFDDLRDFIGQLEERGLLKRIKQEIDPHLEMTEISDRTLRAGGPALLFENPKGFDTPVLTNLFGTTQRVALAMGQDDVAALKEVGKWLAYLKEPEPPKGIKSLWEKLPIFKQVLNMPTKKVRSPACQQVIMEGDDVDLTKLPIMTCWPGDVAPLITWGLTITKGPYKKRQNLGIYRQQLLGKNKIIMRWLSHRGGALDFREWQEVNPGKPFPVSVALGADPATILGAVTPIPDTLSEYAFAGLLRGSRTKVAKSISNDLDIPATAEIILEGYLQPGEEAPEGPYGDHTGYYNEVDDFQVMTVTHVTHRENPIYLSTYTGRPPDEPSILGVALNEIFVPILQKQFPEIVDFYLPPEGCSYRMAVVSIKKSYPGHAKRVMFGIWSFLRQFMYTKFIIVCDDDVNVRDWNDVIWAITTRMDPSRDTTLVDNTPIDYLDFASPVSGLGSKMGMDATNKWAGESDREWGTPILMDKKVKEKIDDLWQDLDILS</sequence>
<dbReference type="EC" id="4.1.1.98" evidence="1"/>
<dbReference type="EMBL" id="CP000510">
    <property type="protein sequence ID" value="ABM04876.1"/>
    <property type="molecule type" value="Genomic_DNA"/>
</dbReference>
<dbReference type="RefSeq" id="WP_011771430.1">
    <property type="nucleotide sequence ID" value="NC_008709.1"/>
</dbReference>
<dbReference type="SMR" id="A1SZG1"/>
<dbReference type="STRING" id="357804.Ping_3188"/>
<dbReference type="KEGG" id="pin:Ping_3188"/>
<dbReference type="eggNOG" id="COG0043">
    <property type="taxonomic scope" value="Bacteria"/>
</dbReference>
<dbReference type="HOGENOM" id="CLU_023348_4_1_6"/>
<dbReference type="OrthoDB" id="9809841at2"/>
<dbReference type="UniPathway" id="UPA00232"/>
<dbReference type="Proteomes" id="UP000000639">
    <property type="component" value="Chromosome"/>
</dbReference>
<dbReference type="GO" id="GO:0005829">
    <property type="term" value="C:cytosol"/>
    <property type="evidence" value="ECO:0007669"/>
    <property type="project" value="TreeGrafter"/>
</dbReference>
<dbReference type="GO" id="GO:0005886">
    <property type="term" value="C:plasma membrane"/>
    <property type="evidence" value="ECO:0007669"/>
    <property type="project" value="UniProtKB-SubCell"/>
</dbReference>
<dbReference type="GO" id="GO:0008694">
    <property type="term" value="F:3-octaprenyl-4-hydroxybenzoate carboxy-lyase activity"/>
    <property type="evidence" value="ECO:0007669"/>
    <property type="project" value="UniProtKB-UniRule"/>
</dbReference>
<dbReference type="GO" id="GO:0046872">
    <property type="term" value="F:metal ion binding"/>
    <property type="evidence" value="ECO:0007669"/>
    <property type="project" value="UniProtKB-KW"/>
</dbReference>
<dbReference type="GO" id="GO:0006744">
    <property type="term" value="P:ubiquinone biosynthetic process"/>
    <property type="evidence" value="ECO:0007669"/>
    <property type="project" value="UniProtKB-UniRule"/>
</dbReference>
<dbReference type="FunFam" id="3.40.1670.10:FF:000001">
    <property type="entry name" value="3-octaprenyl-4-hydroxybenzoate carboxy-lyase"/>
    <property type="match status" value="1"/>
</dbReference>
<dbReference type="Gene3D" id="1.20.5.570">
    <property type="entry name" value="Single helix bin"/>
    <property type="match status" value="1"/>
</dbReference>
<dbReference type="Gene3D" id="3.40.1670.10">
    <property type="entry name" value="UbiD C-terminal domain-like"/>
    <property type="match status" value="1"/>
</dbReference>
<dbReference type="HAMAP" id="MF_01636">
    <property type="entry name" value="UbiD"/>
    <property type="match status" value="1"/>
</dbReference>
<dbReference type="InterPro" id="IPR002830">
    <property type="entry name" value="UbiD"/>
</dbReference>
<dbReference type="InterPro" id="IPR049381">
    <property type="entry name" value="UbiD-like_C"/>
</dbReference>
<dbReference type="InterPro" id="IPR049383">
    <property type="entry name" value="UbiD-like_N"/>
</dbReference>
<dbReference type="InterPro" id="IPR023677">
    <property type="entry name" value="UbiD_bacteria"/>
</dbReference>
<dbReference type="InterPro" id="IPR048304">
    <property type="entry name" value="UbiD_Rift_dom"/>
</dbReference>
<dbReference type="NCBIfam" id="NF008175">
    <property type="entry name" value="PRK10922.1"/>
    <property type="match status" value="1"/>
</dbReference>
<dbReference type="NCBIfam" id="TIGR00148">
    <property type="entry name" value="UbiD family decarboxylase"/>
    <property type="match status" value="1"/>
</dbReference>
<dbReference type="PANTHER" id="PTHR30108">
    <property type="entry name" value="3-OCTAPRENYL-4-HYDROXYBENZOATE CARBOXY-LYASE-RELATED"/>
    <property type="match status" value="1"/>
</dbReference>
<dbReference type="PANTHER" id="PTHR30108:SF17">
    <property type="entry name" value="FERULIC ACID DECARBOXYLASE 1"/>
    <property type="match status" value="1"/>
</dbReference>
<dbReference type="Pfam" id="PF01977">
    <property type="entry name" value="UbiD"/>
    <property type="match status" value="1"/>
</dbReference>
<dbReference type="Pfam" id="PF20696">
    <property type="entry name" value="UbiD_C"/>
    <property type="match status" value="1"/>
</dbReference>
<dbReference type="Pfam" id="PF20695">
    <property type="entry name" value="UbiD_N"/>
    <property type="match status" value="1"/>
</dbReference>
<dbReference type="SUPFAM" id="SSF50475">
    <property type="entry name" value="FMN-binding split barrel"/>
    <property type="match status" value="1"/>
</dbReference>
<dbReference type="SUPFAM" id="SSF143968">
    <property type="entry name" value="UbiD C-terminal domain-like"/>
    <property type="match status" value="1"/>
</dbReference>
<reference key="1">
    <citation type="journal article" date="2008" name="BMC Genomics">
        <title>Genomics of an extreme psychrophile, Psychromonas ingrahamii.</title>
        <authorList>
            <person name="Riley M."/>
            <person name="Staley J.T."/>
            <person name="Danchin A."/>
            <person name="Wang T.Z."/>
            <person name="Brettin T.S."/>
            <person name="Hauser L.J."/>
            <person name="Land M.L."/>
            <person name="Thompson L.S."/>
        </authorList>
    </citation>
    <scope>NUCLEOTIDE SEQUENCE [LARGE SCALE GENOMIC DNA]</scope>
    <source>
        <strain>DSM 17664 / CCUG 51855 / 37</strain>
    </source>
</reference>
<name>UBID_PSYIN</name>
<comment type="function">
    <text evidence="1">Catalyzes the decarboxylation of 3-octaprenyl-4-hydroxy benzoate to 2-octaprenylphenol, an intermediate step in ubiquinone biosynthesis.</text>
</comment>
<comment type="catalytic activity">
    <reaction evidence="1">
        <text>a 4-hydroxy-3-(all-trans-polyprenyl)benzoate + H(+) = a 2-(all-trans-polyprenyl)phenol + CO2</text>
        <dbReference type="Rhea" id="RHEA:41680"/>
        <dbReference type="Rhea" id="RHEA-COMP:9514"/>
        <dbReference type="Rhea" id="RHEA-COMP:9516"/>
        <dbReference type="ChEBI" id="CHEBI:1269"/>
        <dbReference type="ChEBI" id="CHEBI:15378"/>
        <dbReference type="ChEBI" id="CHEBI:16526"/>
        <dbReference type="ChEBI" id="CHEBI:78396"/>
        <dbReference type="EC" id="4.1.1.98"/>
    </reaction>
</comment>
<comment type="cofactor">
    <cofactor evidence="1">
        <name>prenylated FMN</name>
        <dbReference type="ChEBI" id="CHEBI:87746"/>
    </cofactor>
    <text evidence="1">Binds 1 prenylated FMN per subunit.</text>
</comment>
<comment type="cofactor">
    <cofactor evidence="1">
        <name>Mn(2+)</name>
        <dbReference type="ChEBI" id="CHEBI:29035"/>
    </cofactor>
</comment>
<comment type="pathway">
    <text evidence="1">Cofactor biosynthesis; ubiquinone biosynthesis.</text>
</comment>
<comment type="subunit">
    <text evidence="1">Homohexamer.</text>
</comment>
<comment type="subcellular location">
    <subcellularLocation>
        <location evidence="1">Cell membrane</location>
        <topology evidence="1">Peripheral membrane protein</topology>
    </subcellularLocation>
</comment>
<comment type="similarity">
    <text evidence="1">Belongs to the UbiD family.</text>
</comment>
<keyword id="KW-1003">Cell membrane</keyword>
<keyword id="KW-0210">Decarboxylase</keyword>
<keyword id="KW-0285">Flavoprotein</keyword>
<keyword id="KW-0288">FMN</keyword>
<keyword id="KW-0456">Lyase</keyword>
<keyword id="KW-0464">Manganese</keyword>
<keyword id="KW-0472">Membrane</keyword>
<keyword id="KW-0479">Metal-binding</keyword>
<keyword id="KW-1185">Reference proteome</keyword>
<keyword id="KW-0831">Ubiquinone biosynthesis</keyword>
<accession>A1SZG1</accession>
<gene>
    <name evidence="1" type="primary">ubiD</name>
    <name type="ordered locus">Ping_3188</name>
</gene>
<proteinExistence type="inferred from homology"/>
<evidence type="ECO:0000255" key="1">
    <source>
        <dbReference type="HAMAP-Rule" id="MF_01636"/>
    </source>
</evidence>
<protein>
    <recommendedName>
        <fullName evidence="1">3-octaprenyl-4-hydroxybenzoate carboxy-lyase</fullName>
        <ecNumber evidence="1">4.1.1.98</ecNumber>
    </recommendedName>
    <alternativeName>
        <fullName evidence="1">Polyprenyl p-hydroxybenzoate decarboxylase</fullName>
    </alternativeName>
</protein>
<organism>
    <name type="scientific">Psychromonas ingrahamii (strain DSM 17664 / CCUG 51855 / 37)</name>
    <dbReference type="NCBI Taxonomy" id="357804"/>
    <lineage>
        <taxon>Bacteria</taxon>
        <taxon>Pseudomonadati</taxon>
        <taxon>Pseudomonadota</taxon>
        <taxon>Gammaproteobacteria</taxon>
        <taxon>Alteromonadales</taxon>
        <taxon>Psychromonadaceae</taxon>
        <taxon>Psychromonas</taxon>
    </lineage>
</organism>
<feature type="chain" id="PRO_1000069858" description="3-octaprenyl-4-hydroxybenzoate carboxy-lyase">
    <location>
        <begin position="1"/>
        <end position="489"/>
    </location>
</feature>
<feature type="active site" description="Proton donor" evidence="1">
    <location>
        <position position="287"/>
    </location>
</feature>
<feature type="binding site" evidence="1">
    <location>
        <position position="172"/>
    </location>
    <ligand>
        <name>Mn(2+)</name>
        <dbReference type="ChEBI" id="CHEBI:29035"/>
    </ligand>
</feature>
<feature type="binding site" evidence="1">
    <location>
        <begin position="175"/>
        <end position="177"/>
    </location>
    <ligand>
        <name>prenylated FMN</name>
        <dbReference type="ChEBI" id="CHEBI:87746"/>
    </ligand>
</feature>
<feature type="binding site" evidence="1">
    <location>
        <begin position="189"/>
        <end position="191"/>
    </location>
    <ligand>
        <name>prenylated FMN</name>
        <dbReference type="ChEBI" id="CHEBI:87746"/>
    </ligand>
</feature>
<feature type="binding site" evidence="1">
    <location>
        <begin position="194"/>
        <end position="195"/>
    </location>
    <ligand>
        <name>prenylated FMN</name>
        <dbReference type="ChEBI" id="CHEBI:87746"/>
    </ligand>
</feature>
<feature type="binding site" evidence="1">
    <location>
        <position position="238"/>
    </location>
    <ligand>
        <name>Mn(2+)</name>
        <dbReference type="ChEBI" id="CHEBI:29035"/>
    </ligand>
</feature>